<proteinExistence type="inferred from homology"/>
<protein>
    <recommendedName>
        <fullName evidence="1">tRNA(Ile)-lysidine synthase</fullName>
        <ecNumber evidence="1">6.3.4.19</ecNumber>
    </recommendedName>
    <alternativeName>
        <fullName evidence="1">tRNA(Ile)-2-lysyl-cytidine synthase</fullName>
    </alternativeName>
    <alternativeName>
        <fullName evidence="1">tRNA(Ile)-lysidine synthetase</fullName>
    </alternativeName>
</protein>
<dbReference type="EC" id="6.3.4.19" evidence="1"/>
<dbReference type="EMBL" id="BX640416">
    <property type="protein sequence ID" value="CAE42194.1"/>
    <property type="molecule type" value="Genomic_DNA"/>
</dbReference>
<dbReference type="RefSeq" id="NP_880598.1">
    <property type="nucleotide sequence ID" value="NC_002929.2"/>
</dbReference>
<dbReference type="RefSeq" id="WP_010930632.1">
    <property type="nucleotide sequence ID" value="NZ_CP039022.1"/>
</dbReference>
<dbReference type="SMR" id="Q7VX92"/>
<dbReference type="STRING" id="257313.BP1912"/>
<dbReference type="PaxDb" id="257313-BP1912"/>
<dbReference type="GeneID" id="69601695"/>
<dbReference type="KEGG" id="bpe:BP1912"/>
<dbReference type="PATRIC" id="fig|257313.5.peg.2054"/>
<dbReference type="eggNOG" id="COG0037">
    <property type="taxonomic scope" value="Bacteria"/>
</dbReference>
<dbReference type="HOGENOM" id="CLU_018869_2_1_4"/>
<dbReference type="Proteomes" id="UP000002676">
    <property type="component" value="Chromosome"/>
</dbReference>
<dbReference type="GO" id="GO:0005737">
    <property type="term" value="C:cytoplasm"/>
    <property type="evidence" value="ECO:0007669"/>
    <property type="project" value="UniProtKB-SubCell"/>
</dbReference>
<dbReference type="GO" id="GO:0005524">
    <property type="term" value="F:ATP binding"/>
    <property type="evidence" value="ECO:0007669"/>
    <property type="project" value="UniProtKB-UniRule"/>
</dbReference>
<dbReference type="GO" id="GO:0032267">
    <property type="term" value="F:tRNA(Ile)-lysidine synthase activity"/>
    <property type="evidence" value="ECO:0007669"/>
    <property type="project" value="UniProtKB-EC"/>
</dbReference>
<dbReference type="GO" id="GO:0006400">
    <property type="term" value="P:tRNA modification"/>
    <property type="evidence" value="ECO:0007669"/>
    <property type="project" value="UniProtKB-UniRule"/>
</dbReference>
<dbReference type="CDD" id="cd01992">
    <property type="entry name" value="TilS_N"/>
    <property type="match status" value="1"/>
</dbReference>
<dbReference type="Gene3D" id="1.20.59.20">
    <property type="match status" value="1"/>
</dbReference>
<dbReference type="Gene3D" id="3.40.50.620">
    <property type="entry name" value="HUPs"/>
    <property type="match status" value="1"/>
</dbReference>
<dbReference type="HAMAP" id="MF_01161">
    <property type="entry name" value="tRNA_Ile_lys_synt"/>
    <property type="match status" value="1"/>
</dbReference>
<dbReference type="InterPro" id="IPR014729">
    <property type="entry name" value="Rossmann-like_a/b/a_fold"/>
</dbReference>
<dbReference type="InterPro" id="IPR011063">
    <property type="entry name" value="TilS/TtcA_N"/>
</dbReference>
<dbReference type="InterPro" id="IPR012094">
    <property type="entry name" value="tRNA_Ile_lys_synt"/>
</dbReference>
<dbReference type="InterPro" id="IPR012795">
    <property type="entry name" value="tRNA_Ile_lys_synt_N"/>
</dbReference>
<dbReference type="InterPro" id="IPR015262">
    <property type="entry name" value="tRNA_Ile_lys_synt_subst-bd"/>
</dbReference>
<dbReference type="NCBIfam" id="TIGR02432">
    <property type="entry name" value="lysidine_TilS_N"/>
    <property type="match status" value="1"/>
</dbReference>
<dbReference type="PANTHER" id="PTHR43033">
    <property type="entry name" value="TRNA(ILE)-LYSIDINE SYNTHASE-RELATED"/>
    <property type="match status" value="1"/>
</dbReference>
<dbReference type="PANTHER" id="PTHR43033:SF1">
    <property type="entry name" value="TRNA(ILE)-LYSIDINE SYNTHASE-RELATED"/>
    <property type="match status" value="1"/>
</dbReference>
<dbReference type="Pfam" id="PF01171">
    <property type="entry name" value="ATP_bind_3"/>
    <property type="match status" value="1"/>
</dbReference>
<dbReference type="Pfam" id="PF09179">
    <property type="entry name" value="TilS"/>
    <property type="match status" value="1"/>
</dbReference>
<dbReference type="SUPFAM" id="SSF52402">
    <property type="entry name" value="Adenine nucleotide alpha hydrolases-like"/>
    <property type="match status" value="1"/>
</dbReference>
<dbReference type="SUPFAM" id="SSF82829">
    <property type="entry name" value="MesJ substrate recognition domain-like"/>
    <property type="match status" value="1"/>
</dbReference>
<keyword id="KW-0067">ATP-binding</keyword>
<keyword id="KW-0963">Cytoplasm</keyword>
<keyword id="KW-0436">Ligase</keyword>
<keyword id="KW-0547">Nucleotide-binding</keyword>
<keyword id="KW-1185">Reference proteome</keyword>
<keyword id="KW-0819">tRNA processing</keyword>
<name>TILS_BORPE</name>
<sequence>MAAALRALDPAPARLAVAVSGGADSAMLAVAAAAALPPGCTLRLFHVHHGLQAAADQWAAQVRGLGALLGVPVDEARVTVPPGQGLGMEAAARLARYQALAGLARQHGVRHILLAHHRNDQAETVLLRLLRGTGLQGMAAMAPFSERDGVAYLRPWLDVDHAAILALAGAVRAQCGWQAVQDPTNTDPRYARAAVRTQLAPALDARWPGWQAIVARHARQMAEAAEIVAEVAQADFATLEPADAGRSFSLAAWRGLSAARQAQALRHWLASQDAPMPTEARLAELQRQLRQLHALGHDRHLRWQHAGRVVRCERGRVWIDD</sequence>
<gene>
    <name evidence="1" type="primary">tilS</name>
    <name type="ordered locus">BP1912</name>
</gene>
<reference key="1">
    <citation type="journal article" date="2003" name="Nat. Genet.">
        <title>Comparative analysis of the genome sequences of Bordetella pertussis, Bordetella parapertussis and Bordetella bronchiseptica.</title>
        <authorList>
            <person name="Parkhill J."/>
            <person name="Sebaihia M."/>
            <person name="Preston A."/>
            <person name="Murphy L.D."/>
            <person name="Thomson N.R."/>
            <person name="Harris D.E."/>
            <person name="Holden M.T.G."/>
            <person name="Churcher C.M."/>
            <person name="Bentley S.D."/>
            <person name="Mungall K.L."/>
            <person name="Cerdeno-Tarraga A.-M."/>
            <person name="Temple L."/>
            <person name="James K.D."/>
            <person name="Harris B."/>
            <person name="Quail M.A."/>
            <person name="Achtman M."/>
            <person name="Atkin R."/>
            <person name="Baker S."/>
            <person name="Basham D."/>
            <person name="Bason N."/>
            <person name="Cherevach I."/>
            <person name="Chillingworth T."/>
            <person name="Collins M."/>
            <person name="Cronin A."/>
            <person name="Davis P."/>
            <person name="Doggett J."/>
            <person name="Feltwell T."/>
            <person name="Goble A."/>
            <person name="Hamlin N."/>
            <person name="Hauser H."/>
            <person name="Holroyd S."/>
            <person name="Jagels K."/>
            <person name="Leather S."/>
            <person name="Moule S."/>
            <person name="Norberczak H."/>
            <person name="O'Neil S."/>
            <person name="Ormond D."/>
            <person name="Price C."/>
            <person name="Rabbinowitsch E."/>
            <person name="Rutter S."/>
            <person name="Sanders M."/>
            <person name="Saunders D."/>
            <person name="Seeger K."/>
            <person name="Sharp S."/>
            <person name="Simmonds M."/>
            <person name="Skelton J."/>
            <person name="Squares R."/>
            <person name="Squares S."/>
            <person name="Stevens K."/>
            <person name="Unwin L."/>
            <person name="Whitehead S."/>
            <person name="Barrell B.G."/>
            <person name="Maskell D.J."/>
        </authorList>
    </citation>
    <scope>NUCLEOTIDE SEQUENCE [LARGE SCALE GENOMIC DNA]</scope>
    <source>
        <strain>Tohama I / ATCC BAA-589 / NCTC 13251</strain>
    </source>
</reference>
<feature type="chain" id="PRO_0000181660" description="tRNA(Ile)-lysidine synthase">
    <location>
        <begin position="1"/>
        <end position="321"/>
    </location>
</feature>
<feature type="binding site" evidence="1">
    <location>
        <begin position="20"/>
        <end position="25"/>
    </location>
    <ligand>
        <name>ATP</name>
        <dbReference type="ChEBI" id="CHEBI:30616"/>
    </ligand>
</feature>
<comment type="function">
    <text evidence="1">Ligates lysine onto the cytidine present at position 34 of the AUA codon-specific tRNA(Ile) that contains the anticodon CAU, in an ATP-dependent manner. Cytidine is converted to lysidine, thus changing the amino acid specificity of the tRNA from methionine to isoleucine.</text>
</comment>
<comment type="catalytic activity">
    <reaction evidence="1">
        <text>cytidine(34) in tRNA(Ile2) + L-lysine + ATP = lysidine(34) in tRNA(Ile2) + AMP + diphosphate + H(+)</text>
        <dbReference type="Rhea" id="RHEA:43744"/>
        <dbReference type="Rhea" id="RHEA-COMP:10625"/>
        <dbReference type="Rhea" id="RHEA-COMP:10670"/>
        <dbReference type="ChEBI" id="CHEBI:15378"/>
        <dbReference type="ChEBI" id="CHEBI:30616"/>
        <dbReference type="ChEBI" id="CHEBI:32551"/>
        <dbReference type="ChEBI" id="CHEBI:33019"/>
        <dbReference type="ChEBI" id="CHEBI:82748"/>
        <dbReference type="ChEBI" id="CHEBI:83665"/>
        <dbReference type="ChEBI" id="CHEBI:456215"/>
        <dbReference type="EC" id="6.3.4.19"/>
    </reaction>
</comment>
<comment type="subcellular location">
    <subcellularLocation>
        <location evidence="1">Cytoplasm</location>
    </subcellularLocation>
</comment>
<comment type="domain">
    <text>The N-terminal region contains the highly conserved SGGXDS motif, predicted to be a P-loop motif involved in ATP binding.</text>
</comment>
<comment type="similarity">
    <text evidence="1">Belongs to the tRNA(Ile)-lysidine synthase family.</text>
</comment>
<evidence type="ECO:0000255" key="1">
    <source>
        <dbReference type="HAMAP-Rule" id="MF_01161"/>
    </source>
</evidence>
<organism>
    <name type="scientific">Bordetella pertussis (strain Tohama I / ATCC BAA-589 / NCTC 13251)</name>
    <dbReference type="NCBI Taxonomy" id="257313"/>
    <lineage>
        <taxon>Bacteria</taxon>
        <taxon>Pseudomonadati</taxon>
        <taxon>Pseudomonadota</taxon>
        <taxon>Betaproteobacteria</taxon>
        <taxon>Burkholderiales</taxon>
        <taxon>Alcaligenaceae</taxon>
        <taxon>Bordetella</taxon>
    </lineage>
</organism>
<accession>Q7VX92</accession>